<accession>Q1R617</accession>
<comment type="function">
    <text evidence="1">Binds to 23S rRNA. Forms part of two intersubunit bridges in the 70S ribosome.</text>
</comment>
<comment type="subunit">
    <text evidence="1">Part of the 50S ribosomal subunit. Forms a cluster with proteins L3 and L19. In the 70S ribosome, L14 and L19 interact and together make contacts with the 16S rRNA in bridges B5 and B8.</text>
</comment>
<comment type="similarity">
    <text evidence="1">Belongs to the universal ribosomal protein uL14 family.</text>
</comment>
<sequence>MIQEQTMLNVADNSGARRVMCIKVLGGSHRRYAGVGDIIKITIKEAIPRGKVKKGDVLKAVVVRTKKGVRRPDGSVIRFDGNACVLLNNNSEQPIGTRIFGPVTRELRSEKFMKIISLAPEVL</sequence>
<proteinExistence type="inferred from homology"/>
<feature type="chain" id="PRO_0000266481" description="Large ribosomal subunit protein uL14">
    <location>
        <begin position="1"/>
        <end position="123"/>
    </location>
</feature>
<reference key="1">
    <citation type="journal article" date="2006" name="Proc. Natl. Acad. Sci. U.S.A.">
        <title>Identification of genes subject to positive selection in uropathogenic strains of Escherichia coli: a comparative genomics approach.</title>
        <authorList>
            <person name="Chen S.L."/>
            <person name="Hung C.-S."/>
            <person name="Xu J."/>
            <person name="Reigstad C.S."/>
            <person name="Magrini V."/>
            <person name="Sabo A."/>
            <person name="Blasiar D."/>
            <person name="Bieri T."/>
            <person name="Meyer R.R."/>
            <person name="Ozersky P."/>
            <person name="Armstrong J.R."/>
            <person name="Fulton R.S."/>
            <person name="Latreille J.P."/>
            <person name="Spieth J."/>
            <person name="Hooton T.M."/>
            <person name="Mardis E.R."/>
            <person name="Hultgren S.J."/>
            <person name="Gordon J.I."/>
        </authorList>
    </citation>
    <scope>NUCLEOTIDE SEQUENCE [LARGE SCALE GENOMIC DNA]</scope>
    <source>
        <strain>UTI89 / UPEC</strain>
    </source>
</reference>
<protein>
    <recommendedName>
        <fullName evidence="1">Large ribosomal subunit protein uL14</fullName>
    </recommendedName>
    <alternativeName>
        <fullName evidence="2">50S ribosomal protein L14</fullName>
    </alternativeName>
</protein>
<keyword id="KW-0687">Ribonucleoprotein</keyword>
<keyword id="KW-0689">Ribosomal protein</keyword>
<keyword id="KW-0694">RNA-binding</keyword>
<keyword id="KW-0699">rRNA-binding</keyword>
<name>RL14_ECOUT</name>
<organism>
    <name type="scientific">Escherichia coli (strain UTI89 / UPEC)</name>
    <dbReference type="NCBI Taxonomy" id="364106"/>
    <lineage>
        <taxon>Bacteria</taxon>
        <taxon>Pseudomonadati</taxon>
        <taxon>Pseudomonadota</taxon>
        <taxon>Gammaproteobacteria</taxon>
        <taxon>Enterobacterales</taxon>
        <taxon>Enterobacteriaceae</taxon>
        <taxon>Escherichia</taxon>
    </lineage>
</organism>
<dbReference type="EMBL" id="CP000243">
    <property type="protein sequence ID" value="ABE09197.1"/>
    <property type="molecule type" value="Genomic_DNA"/>
</dbReference>
<dbReference type="RefSeq" id="WP_000613955.1">
    <property type="nucleotide sequence ID" value="NZ_CP064825.1"/>
</dbReference>
<dbReference type="SMR" id="Q1R617"/>
<dbReference type="GeneID" id="93778677"/>
<dbReference type="KEGG" id="eci:UTI89_C3760"/>
<dbReference type="HOGENOM" id="CLU_095071_2_1_6"/>
<dbReference type="Proteomes" id="UP000001952">
    <property type="component" value="Chromosome"/>
</dbReference>
<dbReference type="GO" id="GO:0022625">
    <property type="term" value="C:cytosolic large ribosomal subunit"/>
    <property type="evidence" value="ECO:0007669"/>
    <property type="project" value="TreeGrafter"/>
</dbReference>
<dbReference type="GO" id="GO:0070180">
    <property type="term" value="F:large ribosomal subunit rRNA binding"/>
    <property type="evidence" value="ECO:0007669"/>
    <property type="project" value="TreeGrafter"/>
</dbReference>
<dbReference type="GO" id="GO:0003735">
    <property type="term" value="F:structural constituent of ribosome"/>
    <property type="evidence" value="ECO:0007669"/>
    <property type="project" value="InterPro"/>
</dbReference>
<dbReference type="GO" id="GO:0006412">
    <property type="term" value="P:translation"/>
    <property type="evidence" value="ECO:0007669"/>
    <property type="project" value="UniProtKB-UniRule"/>
</dbReference>
<dbReference type="CDD" id="cd00337">
    <property type="entry name" value="Ribosomal_uL14"/>
    <property type="match status" value="1"/>
</dbReference>
<dbReference type="FunFam" id="2.40.150.20:FF:000001">
    <property type="entry name" value="50S ribosomal protein L14"/>
    <property type="match status" value="1"/>
</dbReference>
<dbReference type="Gene3D" id="2.40.150.20">
    <property type="entry name" value="Ribosomal protein L14"/>
    <property type="match status" value="1"/>
</dbReference>
<dbReference type="HAMAP" id="MF_01367">
    <property type="entry name" value="Ribosomal_uL14"/>
    <property type="match status" value="1"/>
</dbReference>
<dbReference type="InterPro" id="IPR000218">
    <property type="entry name" value="Ribosomal_uL14"/>
</dbReference>
<dbReference type="InterPro" id="IPR005745">
    <property type="entry name" value="Ribosomal_uL14_bac-type"/>
</dbReference>
<dbReference type="InterPro" id="IPR019972">
    <property type="entry name" value="Ribosomal_uL14_CS"/>
</dbReference>
<dbReference type="InterPro" id="IPR036853">
    <property type="entry name" value="Ribosomal_uL14_sf"/>
</dbReference>
<dbReference type="NCBIfam" id="TIGR01067">
    <property type="entry name" value="rplN_bact"/>
    <property type="match status" value="1"/>
</dbReference>
<dbReference type="PANTHER" id="PTHR11761">
    <property type="entry name" value="50S/60S RIBOSOMAL PROTEIN L14/L23"/>
    <property type="match status" value="1"/>
</dbReference>
<dbReference type="PANTHER" id="PTHR11761:SF3">
    <property type="entry name" value="LARGE RIBOSOMAL SUBUNIT PROTEIN UL14M"/>
    <property type="match status" value="1"/>
</dbReference>
<dbReference type="Pfam" id="PF00238">
    <property type="entry name" value="Ribosomal_L14"/>
    <property type="match status" value="1"/>
</dbReference>
<dbReference type="SMART" id="SM01374">
    <property type="entry name" value="Ribosomal_L14"/>
    <property type="match status" value="1"/>
</dbReference>
<dbReference type="SUPFAM" id="SSF50193">
    <property type="entry name" value="Ribosomal protein L14"/>
    <property type="match status" value="1"/>
</dbReference>
<dbReference type="PROSITE" id="PS00049">
    <property type="entry name" value="RIBOSOMAL_L14"/>
    <property type="match status" value="1"/>
</dbReference>
<evidence type="ECO:0000255" key="1">
    <source>
        <dbReference type="HAMAP-Rule" id="MF_01367"/>
    </source>
</evidence>
<evidence type="ECO:0000305" key="2"/>
<gene>
    <name evidence="1" type="primary">rplN</name>
    <name type="ordered locus">UTI89_C3760</name>
</gene>